<keyword id="KW-0687">Ribonucleoprotein</keyword>
<keyword id="KW-0689">Ribosomal protein</keyword>
<keyword id="KW-0694">RNA-binding</keyword>
<keyword id="KW-0699">rRNA-binding</keyword>
<evidence type="ECO:0000255" key="1">
    <source>
        <dbReference type="HAMAP-Rule" id="MF_00362"/>
    </source>
</evidence>
<evidence type="ECO:0000305" key="2"/>
<feature type="chain" id="PRO_0000154744" description="Large ribosomal subunit protein uL10">
    <location>
        <begin position="1"/>
        <end position="162"/>
    </location>
</feature>
<dbReference type="EMBL" id="BA000031">
    <property type="protein sequence ID" value="BAC61187.1"/>
    <property type="molecule type" value="Genomic_DNA"/>
</dbReference>
<dbReference type="RefSeq" id="NP_799303.1">
    <property type="nucleotide sequence ID" value="NC_004603.1"/>
</dbReference>
<dbReference type="RefSeq" id="WP_005481772.1">
    <property type="nucleotide sequence ID" value="NC_004603.1"/>
</dbReference>
<dbReference type="GeneID" id="1190499"/>
<dbReference type="KEGG" id="vpa:VP2924"/>
<dbReference type="PATRIC" id="fig|223926.6.peg.2812"/>
<dbReference type="eggNOG" id="COG0244">
    <property type="taxonomic scope" value="Bacteria"/>
</dbReference>
<dbReference type="HOGENOM" id="CLU_092227_0_2_6"/>
<dbReference type="Proteomes" id="UP000002493">
    <property type="component" value="Chromosome 1"/>
</dbReference>
<dbReference type="GO" id="GO:1990904">
    <property type="term" value="C:ribonucleoprotein complex"/>
    <property type="evidence" value="ECO:0007669"/>
    <property type="project" value="UniProtKB-KW"/>
</dbReference>
<dbReference type="GO" id="GO:0005840">
    <property type="term" value="C:ribosome"/>
    <property type="evidence" value="ECO:0007669"/>
    <property type="project" value="UniProtKB-KW"/>
</dbReference>
<dbReference type="GO" id="GO:0070180">
    <property type="term" value="F:large ribosomal subunit rRNA binding"/>
    <property type="evidence" value="ECO:0007669"/>
    <property type="project" value="UniProtKB-UniRule"/>
</dbReference>
<dbReference type="GO" id="GO:0006412">
    <property type="term" value="P:translation"/>
    <property type="evidence" value="ECO:0007669"/>
    <property type="project" value="UniProtKB-UniRule"/>
</dbReference>
<dbReference type="CDD" id="cd05797">
    <property type="entry name" value="Ribosomal_L10"/>
    <property type="match status" value="1"/>
</dbReference>
<dbReference type="FunFam" id="3.30.70.1730:FF:000001">
    <property type="entry name" value="50S ribosomal protein L10"/>
    <property type="match status" value="1"/>
</dbReference>
<dbReference type="Gene3D" id="3.30.70.1730">
    <property type="match status" value="1"/>
</dbReference>
<dbReference type="Gene3D" id="6.10.250.2350">
    <property type="match status" value="1"/>
</dbReference>
<dbReference type="HAMAP" id="MF_00362">
    <property type="entry name" value="Ribosomal_uL10"/>
    <property type="match status" value="1"/>
</dbReference>
<dbReference type="InterPro" id="IPR001790">
    <property type="entry name" value="Ribosomal_uL10"/>
</dbReference>
<dbReference type="InterPro" id="IPR043141">
    <property type="entry name" value="Ribosomal_uL10-like_sf"/>
</dbReference>
<dbReference type="InterPro" id="IPR022973">
    <property type="entry name" value="Ribosomal_uL10_bac"/>
</dbReference>
<dbReference type="InterPro" id="IPR047865">
    <property type="entry name" value="Ribosomal_uL10_bac_type"/>
</dbReference>
<dbReference type="NCBIfam" id="NF000955">
    <property type="entry name" value="PRK00099.1-1"/>
    <property type="match status" value="1"/>
</dbReference>
<dbReference type="PANTHER" id="PTHR11560">
    <property type="entry name" value="39S RIBOSOMAL PROTEIN L10, MITOCHONDRIAL"/>
    <property type="match status" value="1"/>
</dbReference>
<dbReference type="Pfam" id="PF00466">
    <property type="entry name" value="Ribosomal_L10"/>
    <property type="match status" value="1"/>
</dbReference>
<dbReference type="SUPFAM" id="SSF160369">
    <property type="entry name" value="Ribosomal protein L10-like"/>
    <property type="match status" value="1"/>
</dbReference>
<gene>
    <name evidence="1" type="primary">rplJ</name>
    <name type="ordered locus">VP2924</name>
</gene>
<reference key="1">
    <citation type="journal article" date="2003" name="Lancet">
        <title>Genome sequence of Vibrio parahaemolyticus: a pathogenic mechanism distinct from that of V. cholerae.</title>
        <authorList>
            <person name="Makino K."/>
            <person name="Oshima K."/>
            <person name="Kurokawa K."/>
            <person name="Yokoyama K."/>
            <person name="Uda T."/>
            <person name="Tagomori K."/>
            <person name="Iijima Y."/>
            <person name="Najima M."/>
            <person name="Nakano M."/>
            <person name="Yamashita A."/>
            <person name="Kubota Y."/>
            <person name="Kimura S."/>
            <person name="Yasunaga T."/>
            <person name="Honda T."/>
            <person name="Shinagawa H."/>
            <person name="Hattori M."/>
            <person name="Iida T."/>
        </authorList>
    </citation>
    <scope>NUCLEOTIDE SEQUENCE [LARGE SCALE GENOMIC DNA]</scope>
    <source>
        <strain>RIMD 2210633</strain>
    </source>
</reference>
<comment type="function">
    <text evidence="1">Forms part of the ribosomal stalk, playing a central role in the interaction of the ribosome with GTP-bound translation factors.</text>
</comment>
<comment type="subunit">
    <text evidence="1">Part of the ribosomal stalk of the 50S ribosomal subunit. The N-terminus interacts with L11 and the large rRNA to form the base of the stalk. The C-terminus forms an elongated spine to which L12 dimers bind in a sequential fashion forming a multimeric L10(L12)X complex.</text>
</comment>
<comment type="similarity">
    <text evidence="1">Belongs to the universal ribosomal protein uL10 family.</text>
</comment>
<protein>
    <recommendedName>
        <fullName evidence="1">Large ribosomal subunit protein uL10</fullName>
    </recommendedName>
    <alternativeName>
        <fullName evidence="2">50S ribosomal protein L10</fullName>
    </alternativeName>
</protein>
<accession>Q87KQ2</accession>
<sequence>MALNLQDKKAIVAEVNEAASGALSAVVADSRGVEVGAMTSLRKQAREAGVYMKVVRNTLARRAVQGTDYECLTDTFTGPTLIAFSNEHPGAAARLFKDFAKENKDFEIKAAAFEGALTDAEVLATLPTYDEAIARLMMCMKEASAGKLVRTIAAIRDQKEAA</sequence>
<proteinExistence type="inferred from homology"/>
<organism>
    <name type="scientific">Vibrio parahaemolyticus serotype O3:K6 (strain RIMD 2210633)</name>
    <dbReference type="NCBI Taxonomy" id="223926"/>
    <lineage>
        <taxon>Bacteria</taxon>
        <taxon>Pseudomonadati</taxon>
        <taxon>Pseudomonadota</taxon>
        <taxon>Gammaproteobacteria</taxon>
        <taxon>Vibrionales</taxon>
        <taxon>Vibrionaceae</taxon>
        <taxon>Vibrio</taxon>
    </lineage>
</organism>
<name>RL10_VIBPA</name>